<name>PNOC_BOVIN</name>
<organism>
    <name type="scientific">Bos taurus</name>
    <name type="common">Bovine</name>
    <dbReference type="NCBI Taxonomy" id="9913"/>
    <lineage>
        <taxon>Eukaryota</taxon>
        <taxon>Metazoa</taxon>
        <taxon>Chordata</taxon>
        <taxon>Craniata</taxon>
        <taxon>Vertebrata</taxon>
        <taxon>Euteleostomi</taxon>
        <taxon>Mammalia</taxon>
        <taxon>Eutheria</taxon>
        <taxon>Laurasiatheria</taxon>
        <taxon>Artiodactyla</taxon>
        <taxon>Ruminantia</taxon>
        <taxon>Pecora</taxon>
        <taxon>Bovidae</taxon>
        <taxon>Bovinae</taxon>
        <taxon>Bos</taxon>
    </lineage>
</organism>
<accession>O62647</accession>
<comment type="function">
    <molecule>Nociceptin</molecule>
    <text evidence="1">Ligand of the opioid receptor-like receptor OPRL1. It may act as a transmitter in the brain by modulating nociceptive and locomotor behavior. May be involved in neuronal differentiation and development.</text>
</comment>
<comment type="function">
    <molecule>Nocistatin</molecule>
    <text evidence="4">Blocks nociceptin action in pain transmission by inhibiting nociceptin-induced hyperalgesia and allodynia.</text>
</comment>
<comment type="function">
    <molecule>Orphanin FQ2</molecule>
    <text evidence="2">Has potent analgesic activity.</text>
</comment>
<comment type="subcellular location">
    <subcellularLocation>
        <location>Secreted</location>
    </subcellularLocation>
</comment>
<comment type="PTM">
    <text>Specific enzymatic cleavages at paired basic residues probably yield other active peptides besides nociceptin.</text>
</comment>
<comment type="PTM">
    <text>The N-terminal domain contains 6 conserved cysteines thought to be involved in disulfide bonding and/or processing.</text>
</comment>
<comment type="similarity">
    <text evidence="5">Belongs to the opioid neuropeptide precursor family.</text>
</comment>
<protein>
    <recommendedName>
        <fullName>Prepronociceptin</fullName>
    </recommendedName>
    <component>
        <recommendedName>
            <fullName>Nocistatin</fullName>
        </recommendedName>
    </component>
    <component>
        <recommendedName>
            <fullName>Nociceptin</fullName>
        </recommendedName>
        <alternativeName>
            <fullName>Orphanin FQ</fullName>
        </alternativeName>
        <alternativeName>
            <fullName>PPNOC</fullName>
        </alternativeName>
    </component>
    <component>
        <recommendedName>
            <fullName>Orphanin FQ2</fullName>
        </recommendedName>
    </component>
</protein>
<gene>
    <name type="primary">PNOC</name>
</gene>
<keyword id="KW-0165">Cleavage on pair of basic residues</keyword>
<keyword id="KW-1015">Disulfide bond</keyword>
<keyword id="KW-0527">Neuropeptide</keyword>
<keyword id="KW-0529">Neurotransmitter</keyword>
<keyword id="KW-0555">Opioid peptide</keyword>
<keyword id="KW-1185">Reference proteome</keyword>
<keyword id="KW-0964">Secreted</keyword>
<keyword id="KW-0732">Signal</keyword>
<dbReference type="EMBL" id="AB005251">
    <property type="protein sequence ID" value="BAA25419.1"/>
    <property type="molecule type" value="mRNA"/>
</dbReference>
<dbReference type="RefSeq" id="NP_776575.1">
    <property type="nucleotide sequence ID" value="NM_174150.2"/>
</dbReference>
<dbReference type="RefSeq" id="XP_015327885.1">
    <property type="nucleotide sequence ID" value="XM_015472399.1"/>
</dbReference>
<dbReference type="FunCoup" id="O62647">
    <property type="interactions" value="267"/>
</dbReference>
<dbReference type="STRING" id="9913.ENSBTAP00000000695"/>
<dbReference type="PaxDb" id="9913-ENSBTAP00000000695"/>
<dbReference type="GeneID" id="281414"/>
<dbReference type="KEGG" id="bta:281414"/>
<dbReference type="CTD" id="5368"/>
<dbReference type="VEuPathDB" id="HostDB:ENSBTAG00000000534"/>
<dbReference type="eggNOG" id="ENOG502S0DD">
    <property type="taxonomic scope" value="Eukaryota"/>
</dbReference>
<dbReference type="HOGENOM" id="CLU_143892_0_0_1"/>
<dbReference type="InParanoid" id="O62647"/>
<dbReference type="OMA" id="DCLNCHR"/>
<dbReference type="OrthoDB" id="9884757at2759"/>
<dbReference type="TreeFam" id="TF332620"/>
<dbReference type="Reactome" id="R-BTA-375276">
    <property type="pathway name" value="Peptide ligand-binding receptors"/>
</dbReference>
<dbReference type="Reactome" id="R-BTA-418594">
    <property type="pathway name" value="G alpha (i) signalling events"/>
</dbReference>
<dbReference type="Proteomes" id="UP000009136">
    <property type="component" value="Chromosome 8"/>
</dbReference>
<dbReference type="Bgee" id="ENSBTAG00000000534">
    <property type="expression patterns" value="Expressed in oocyte and 23 other cell types or tissues"/>
</dbReference>
<dbReference type="GO" id="GO:0043679">
    <property type="term" value="C:axon terminus"/>
    <property type="evidence" value="ECO:0000318"/>
    <property type="project" value="GO_Central"/>
</dbReference>
<dbReference type="GO" id="GO:0030425">
    <property type="term" value="C:dendrite"/>
    <property type="evidence" value="ECO:0000318"/>
    <property type="project" value="GO_Central"/>
</dbReference>
<dbReference type="GO" id="GO:0005576">
    <property type="term" value="C:extracellular region"/>
    <property type="evidence" value="ECO:0007669"/>
    <property type="project" value="UniProtKB-SubCell"/>
</dbReference>
<dbReference type="GO" id="GO:0043025">
    <property type="term" value="C:neuronal cell body"/>
    <property type="evidence" value="ECO:0000318"/>
    <property type="project" value="GO_Central"/>
</dbReference>
<dbReference type="GO" id="GO:0005886">
    <property type="term" value="C:plasma membrane"/>
    <property type="evidence" value="ECO:0000318"/>
    <property type="project" value="GO_Central"/>
</dbReference>
<dbReference type="GO" id="GO:0001515">
    <property type="term" value="F:opioid peptide activity"/>
    <property type="evidence" value="ECO:0007669"/>
    <property type="project" value="UniProtKB-KW"/>
</dbReference>
<dbReference type="GO" id="GO:0007268">
    <property type="term" value="P:chemical synaptic transmission"/>
    <property type="evidence" value="ECO:0000318"/>
    <property type="project" value="GO_Central"/>
</dbReference>
<dbReference type="GO" id="GO:0007218">
    <property type="term" value="P:neuropeptide signaling pathway"/>
    <property type="evidence" value="ECO:0000318"/>
    <property type="project" value="GO_Central"/>
</dbReference>
<dbReference type="GO" id="GO:0007600">
    <property type="term" value="P:sensory perception"/>
    <property type="evidence" value="ECO:0000318"/>
    <property type="project" value="GO_Central"/>
</dbReference>
<dbReference type="InterPro" id="IPR002367">
    <property type="entry name" value="Nociceptin"/>
</dbReference>
<dbReference type="InterPro" id="IPR006024">
    <property type="entry name" value="Opioid_neupept"/>
</dbReference>
<dbReference type="PANTHER" id="PTHR11438:SF2">
    <property type="entry name" value="PREPRONOCICEPTIN"/>
    <property type="match status" value="1"/>
</dbReference>
<dbReference type="PANTHER" id="PTHR11438">
    <property type="entry name" value="PROENKEPHALIN"/>
    <property type="match status" value="1"/>
</dbReference>
<dbReference type="Pfam" id="PF01160">
    <property type="entry name" value="Opiods_neuropep"/>
    <property type="match status" value="1"/>
</dbReference>
<dbReference type="PRINTS" id="PR01028">
    <property type="entry name" value="OPIOIDPRCRSR"/>
</dbReference>
<dbReference type="PRINTS" id="PR01031">
    <property type="entry name" value="ORPHNNPRCRSR"/>
</dbReference>
<dbReference type="PROSITE" id="PS01252">
    <property type="entry name" value="OPIOIDS_PRECURSOR"/>
    <property type="match status" value="1"/>
</dbReference>
<evidence type="ECO:0000250" key="1">
    <source>
        <dbReference type="UniProtKB" id="P55791"/>
    </source>
</evidence>
<evidence type="ECO:0000250" key="2">
    <source>
        <dbReference type="UniProtKB" id="Q64387"/>
    </source>
</evidence>
<evidence type="ECO:0000255" key="3"/>
<evidence type="ECO:0000269" key="4">
    <source>
    </source>
</evidence>
<evidence type="ECO:0000305" key="5"/>
<sequence length="176" mass="20256">MKILFCDLLLLSLFSSVSSSCQKDCLVCREKLRPTLDSFSLEMCILECEEKAFTSPLWTPCTKVMARGSWQLSPADPDHVAAALDQPRASEMQHLKRMPRVRSLFQRQKRTEPGLEEVGEIEQKQLQKRFGGFTGARKSARKLANQKRFSEFMRQYLVLSMQSSQRRRTLHQNGNA</sequence>
<feature type="signal peptide" evidence="3">
    <location>
        <begin position="1"/>
        <end position="19"/>
    </location>
</feature>
<feature type="propeptide" id="PRO_0000008320">
    <location>
        <begin position="20"/>
        <end position="95"/>
    </location>
</feature>
<feature type="peptide" id="PRO_0000008321" description="Nocistatin" evidence="5">
    <location>
        <begin position="98"/>
        <end position="127"/>
    </location>
</feature>
<feature type="peptide" id="PRO_0000008322" description="Nociceptin" evidence="1">
    <location>
        <begin position="130"/>
        <end position="146"/>
    </location>
</feature>
<feature type="peptide" id="PRO_0000008323" description="Orphanin FQ2" evidence="5">
    <location>
        <begin position="149"/>
        <end position="165"/>
    </location>
</feature>
<feature type="propeptide" id="PRO_0000008324">
    <location>
        <begin position="169"/>
        <end position="176"/>
    </location>
</feature>
<reference key="1">
    <citation type="journal article" date="1998" name="Nature">
        <title>Nocistatin, a peptide that blocks nociceptin action in pain transmission.</title>
        <authorList>
            <person name="Okuda-Ashitaka E."/>
            <person name="Minami T."/>
            <person name="Tachibana S."/>
            <person name="Yoshihara Y."/>
            <person name="Nishiuchi Y."/>
            <person name="Kimura T."/>
            <person name="Ito S."/>
        </authorList>
    </citation>
    <scope>NUCLEOTIDE SEQUENCE [MRNA]</scope>
    <scope>FUNCTION OF NOCISTATIN</scope>
</reference>
<proteinExistence type="evidence at transcript level"/>